<accession>P30242</accession>
<organismHost>
    <name type="scientific">Gallus gallus</name>
    <name type="common">Chicken</name>
    <dbReference type="NCBI Taxonomy" id="9031"/>
</organismHost>
<proteinExistence type="predicted"/>
<gene>
    <name type="ORF">3b</name>
</gene>
<dbReference type="EMBL" id="X59819">
    <property type="protein sequence ID" value="CAA42488.1"/>
    <property type="molecule type" value="Genomic_RNA"/>
</dbReference>
<dbReference type="PIR" id="H41038">
    <property type="entry name" value="WMIHB8"/>
</dbReference>
<dbReference type="SMR" id="P30242"/>
<dbReference type="InterPro" id="IPR005295">
    <property type="entry name" value="IBV_3B"/>
</dbReference>
<dbReference type="Pfam" id="PF03622">
    <property type="entry name" value="IBV_3B"/>
    <property type="match status" value="1"/>
</dbReference>
<sequence length="64" mass="7279">MLDFAAIIETGQQIIQQISFNLQHISSVLSTELFDPFEVCVYRGGNYWELESADDCSGDDEFIE</sequence>
<protein>
    <recommendedName>
        <fullName>Non-structural protein 3b</fullName>
        <shortName>ns3b</shortName>
    </recommendedName>
    <alternativeName>
        <fullName>Accessory protein 3b</fullName>
    </alternativeName>
</protein>
<reference key="1">
    <citation type="journal article" date="1991" name="Virology">
        <title>A polycistronic mRNA specified by the coronavirus infectious bronchitis virus.</title>
        <authorList>
            <person name="Liu D.X."/>
            <person name="Cavanagh D."/>
            <person name="Green P."/>
            <person name="Inglis S.C."/>
        </authorList>
    </citation>
    <scope>NUCLEOTIDE SEQUENCE [GENOMIC RNA]</scope>
</reference>
<feature type="chain" id="PRO_0000106115" description="Non-structural protein 3b">
    <location>
        <begin position="1"/>
        <end position="64"/>
    </location>
</feature>
<organism>
    <name type="scientific">Avian infectious bronchitis virus (strain Portugal/322/82)</name>
    <name type="common">IBV</name>
    <dbReference type="NCBI Taxonomy" id="31625"/>
    <lineage>
        <taxon>Viruses</taxon>
        <taxon>Riboviria</taxon>
        <taxon>Orthornavirae</taxon>
        <taxon>Pisuviricota</taxon>
        <taxon>Pisoniviricetes</taxon>
        <taxon>Nidovirales</taxon>
        <taxon>Cornidovirineae</taxon>
        <taxon>Coronaviridae</taxon>
        <taxon>Orthocoronavirinae</taxon>
        <taxon>Gammacoronavirus</taxon>
        <taxon>Igacovirus</taxon>
        <taxon>Avian coronavirus</taxon>
    </lineage>
</organism>
<name>NS3B_IBVP3</name>